<keyword id="KW-0342">GTP-binding</keyword>
<keyword id="KW-0449">Lipoprotein</keyword>
<keyword id="KW-0460">Magnesium</keyword>
<keyword id="KW-0479">Metal-binding</keyword>
<keyword id="KW-0519">Myristate</keyword>
<keyword id="KW-0547">Nucleotide-binding</keyword>
<keyword id="KW-0564">Palmitate</keyword>
<keyword id="KW-0807">Transducer</keyword>
<organism>
    <name type="scientific">Mizuhopecten yessoensis</name>
    <name type="common">Japanese scallop</name>
    <name type="synonym">Patinopecten yessoensis</name>
    <dbReference type="NCBI Taxonomy" id="6573"/>
    <lineage>
        <taxon>Eukaryota</taxon>
        <taxon>Metazoa</taxon>
        <taxon>Spiralia</taxon>
        <taxon>Lophotrochozoa</taxon>
        <taxon>Mollusca</taxon>
        <taxon>Bivalvia</taxon>
        <taxon>Autobranchia</taxon>
        <taxon>Pteriomorphia</taxon>
        <taxon>Pectinida</taxon>
        <taxon>Pectinoidea</taxon>
        <taxon>Pectinidae</taxon>
        <taxon>Mizuhopecten</taxon>
    </lineage>
</organism>
<accession>O15976</accession>
<proteinExistence type="evidence at transcript level"/>
<gene>
    <name type="primary">SCGOA</name>
</gene>
<sequence length="357" mass="40754">MGCTMSAEDRAAAERSRDIEKKLKEDGIQAAKDIKLLLLGAGESGKSTIVKQMKIIHEGGFTSEDNKQYKPVVYSNTIQSLVAIVRAMSTLNIPYGDNEREEIKSDAKIVLDVIARMEDTEPFSEELLAAMKRLWTDTGVQECFGRSNEYQLNDSAKYFLDDLDRLGSKDYMPTEQDILRTRVKTTGIVEVHFSFKNLNFKLFDVGGQRSERKKWIHCFEDVTAIIFCVAMSEYDQVLHEDETTNRMQESLKLFDNICNNKWFTDTSIILFLNKKDLFEEKIKKSSLTICFNEYTGNQTYEEAAAYIQAQFEAKNKSSSKEIYCHQTCATDTNNIQFVFDAVTDVIIANNLRGCGLY</sequence>
<feature type="initiator methionine" description="Removed" evidence="1">
    <location>
        <position position="1"/>
    </location>
</feature>
<feature type="chain" id="PRO_0000203714" description="Guanine nucleotide-binding protein G(o) subunit alpha">
    <location>
        <begin position="2"/>
        <end position="357"/>
    </location>
</feature>
<feature type="domain" description="G-alpha" evidence="3">
    <location>
        <begin position="32"/>
        <end position="357"/>
    </location>
</feature>
<feature type="region of interest" description="G1 motif" evidence="3">
    <location>
        <begin position="35"/>
        <end position="48"/>
    </location>
</feature>
<feature type="region of interest" description="G2 motif" evidence="3">
    <location>
        <begin position="177"/>
        <end position="185"/>
    </location>
</feature>
<feature type="region of interest" description="G3 motif" evidence="3">
    <location>
        <begin position="200"/>
        <end position="209"/>
    </location>
</feature>
<feature type="region of interest" description="G4 motif" evidence="3">
    <location>
        <begin position="269"/>
        <end position="276"/>
    </location>
</feature>
<feature type="region of interest" description="G5 motif" evidence="3">
    <location>
        <begin position="327"/>
        <end position="332"/>
    </location>
</feature>
<feature type="binding site" evidence="1">
    <location>
        <begin position="40"/>
        <end position="47"/>
    </location>
    <ligand>
        <name>GTP</name>
        <dbReference type="ChEBI" id="CHEBI:37565"/>
    </ligand>
</feature>
<feature type="binding site" evidence="1">
    <location>
        <position position="47"/>
    </location>
    <ligand>
        <name>Mg(2+)</name>
        <dbReference type="ChEBI" id="CHEBI:18420"/>
    </ligand>
</feature>
<feature type="binding site" evidence="1">
    <location>
        <begin position="179"/>
        <end position="185"/>
    </location>
    <ligand>
        <name>GTP</name>
        <dbReference type="ChEBI" id="CHEBI:37565"/>
    </ligand>
</feature>
<feature type="binding site" evidence="1">
    <location>
        <position position="185"/>
    </location>
    <ligand>
        <name>Mg(2+)</name>
        <dbReference type="ChEBI" id="CHEBI:18420"/>
    </ligand>
</feature>
<feature type="binding site" evidence="1">
    <location>
        <begin position="204"/>
        <end position="208"/>
    </location>
    <ligand>
        <name>GTP</name>
        <dbReference type="ChEBI" id="CHEBI:37565"/>
    </ligand>
</feature>
<feature type="binding site" evidence="1">
    <location>
        <begin position="273"/>
        <end position="276"/>
    </location>
    <ligand>
        <name>GTP</name>
        <dbReference type="ChEBI" id="CHEBI:37565"/>
    </ligand>
</feature>
<feature type="binding site" evidence="1">
    <location>
        <position position="329"/>
    </location>
    <ligand>
        <name>GTP</name>
        <dbReference type="ChEBI" id="CHEBI:37565"/>
    </ligand>
</feature>
<feature type="lipid moiety-binding region" description="N-myristoyl glycine" evidence="2">
    <location>
        <position position="2"/>
    </location>
</feature>
<feature type="lipid moiety-binding region" description="S-palmitoyl cysteine" evidence="2">
    <location>
        <position position="3"/>
    </location>
</feature>
<reference key="1">
    <citation type="journal article" date="1997" name="J. Biol. Chem.">
        <title>A novel Go-mediated phototransduction cascade in scallop visual cells.</title>
        <authorList>
            <person name="Kojima D."/>
            <person name="Terakita A."/>
            <person name="Ishikawa T."/>
            <person name="Tsukahara Y."/>
            <person name="Maeda A."/>
            <person name="Shichida Y."/>
        </authorList>
    </citation>
    <scope>NUCLEOTIDE SEQUENCE [MRNA]</scope>
    <source>
        <tissue>Eye</tissue>
    </source>
</reference>
<evidence type="ECO:0000250" key="1"/>
<evidence type="ECO:0000255" key="2"/>
<evidence type="ECO:0000255" key="3">
    <source>
        <dbReference type="PROSITE-ProRule" id="PRU01230"/>
    </source>
</evidence>
<evidence type="ECO:0000305" key="4"/>
<dbReference type="EMBL" id="AB006457">
    <property type="protein sequence ID" value="BAA22220.1"/>
    <property type="molecule type" value="mRNA"/>
</dbReference>
<dbReference type="SMR" id="O15976"/>
<dbReference type="EnsemblMetazoa" id="XM_021502574.1">
    <property type="protein sequence ID" value="XP_021358249.1"/>
    <property type="gene ID" value="LOC110453591"/>
</dbReference>
<dbReference type="OrthoDB" id="5817230at2759"/>
<dbReference type="GO" id="GO:0005737">
    <property type="term" value="C:cytoplasm"/>
    <property type="evidence" value="ECO:0007669"/>
    <property type="project" value="TreeGrafter"/>
</dbReference>
<dbReference type="GO" id="GO:0005834">
    <property type="term" value="C:heterotrimeric G-protein complex"/>
    <property type="evidence" value="ECO:0007669"/>
    <property type="project" value="TreeGrafter"/>
</dbReference>
<dbReference type="GO" id="GO:0001664">
    <property type="term" value="F:G protein-coupled receptor binding"/>
    <property type="evidence" value="ECO:0007669"/>
    <property type="project" value="TreeGrafter"/>
</dbReference>
<dbReference type="GO" id="GO:0031683">
    <property type="term" value="F:G-protein beta/gamma-subunit complex binding"/>
    <property type="evidence" value="ECO:0007669"/>
    <property type="project" value="InterPro"/>
</dbReference>
<dbReference type="GO" id="GO:0005525">
    <property type="term" value="F:GTP binding"/>
    <property type="evidence" value="ECO:0007669"/>
    <property type="project" value="UniProtKB-KW"/>
</dbReference>
<dbReference type="GO" id="GO:0003924">
    <property type="term" value="F:GTPase activity"/>
    <property type="evidence" value="ECO:0007669"/>
    <property type="project" value="InterPro"/>
</dbReference>
<dbReference type="GO" id="GO:0046872">
    <property type="term" value="F:metal ion binding"/>
    <property type="evidence" value="ECO:0007669"/>
    <property type="project" value="UniProtKB-KW"/>
</dbReference>
<dbReference type="GO" id="GO:0007188">
    <property type="term" value="P:adenylate cyclase-modulating G protein-coupled receptor signaling pathway"/>
    <property type="evidence" value="ECO:0007669"/>
    <property type="project" value="InterPro"/>
</dbReference>
<dbReference type="CDD" id="cd00066">
    <property type="entry name" value="G-alpha"/>
    <property type="match status" value="1"/>
</dbReference>
<dbReference type="FunFam" id="1.10.400.10:FF:000001">
    <property type="entry name" value="Guanine nucleotide-binding protein G(I) subunit alpha"/>
    <property type="match status" value="1"/>
</dbReference>
<dbReference type="FunFam" id="3.40.50.300:FF:003559">
    <property type="entry name" value="Guanine nucleotide-binding protein G(i) subunit alpha-1"/>
    <property type="match status" value="1"/>
</dbReference>
<dbReference type="FunFam" id="3.40.50.300:FF:002307">
    <property type="entry name" value="Guanine nucleotide-binding protein G(k) subunit alpha"/>
    <property type="match status" value="1"/>
</dbReference>
<dbReference type="Gene3D" id="1.10.400.10">
    <property type="entry name" value="GI Alpha 1, domain 2-like"/>
    <property type="match status" value="1"/>
</dbReference>
<dbReference type="Gene3D" id="3.40.50.300">
    <property type="entry name" value="P-loop containing nucleotide triphosphate hydrolases"/>
    <property type="match status" value="1"/>
</dbReference>
<dbReference type="InterPro" id="IPR001408">
    <property type="entry name" value="Gprotein_alpha_I"/>
</dbReference>
<dbReference type="InterPro" id="IPR001019">
    <property type="entry name" value="Gprotein_alpha_su"/>
</dbReference>
<dbReference type="InterPro" id="IPR011025">
    <property type="entry name" value="GproteinA_insert"/>
</dbReference>
<dbReference type="InterPro" id="IPR027417">
    <property type="entry name" value="P-loop_NTPase"/>
</dbReference>
<dbReference type="PANTHER" id="PTHR10218:SF362">
    <property type="entry name" value="G PROTEIN ALPHA O SUBUNIT"/>
    <property type="match status" value="1"/>
</dbReference>
<dbReference type="PANTHER" id="PTHR10218">
    <property type="entry name" value="GTP-BINDING PROTEIN ALPHA SUBUNIT"/>
    <property type="match status" value="1"/>
</dbReference>
<dbReference type="Pfam" id="PF00503">
    <property type="entry name" value="G-alpha"/>
    <property type="match status" value="1"/>
</dbReference>
<dbReference type="PRINTS" id="PR00318">
    <property type="entry name" value="GPROTEINA"/>
</dbReference>
<dbReference type="PRINTS" id="PR00441">
    <property type="entry name" value="GPROTEINAI"/>
</dbReference>
<dbReference type="SMART" id="SM00275">
    <property type="entry name" value="G_alpha"/>
    <property type="match status" value="1"/>
</dbReference>
<dbReference type="SUPFAM" id="SSF52540">
    <property type="entry name" value="P-loop containing nucleoside triphosphate hydrolases"/>
    <property type="match status" value="1"/>
</dbReference>
<dbReference type="SUPFAM" id="SSF47895">
    <property type="entry name" value="Transducin (alpha subunit), insertion domain"/>
    <property type="match status" value="1"/>
</dbReference>
<dbReference type="PROSITE" id="PS51882">
    <property type="entry name" value="G_ALPHA"/>
    <property type="match status" value="1"/>
</dbReference>
<protein>
    <recommendedName>
        <fullName>Guanine nucleotide-binding protein G(o) subunit alpha</fullName>
    </recommendedName>
</protein>
<comment type="function">
    <text>Guanine nucleotide-binding proteins (G proteins) are involved as modulators or transducers in various transmembrane signaling systems. The G(o) protein function is not clear.</text>
</comment>
<comment type="subunit">
    <text>G proteins are composed of 3 units; alpha, beta and gamma. The alpha chain contains the guanine nucleotide binding site.</text>
</comment>
<comment type="similarity">
    <text evidence="4">Belongs to the G-alpha family. G(i/o/t/z) subfamily.</text>
</comment>
<name>GNAO_MIZYE</name>